<reference evidence="9" key="1">
    <citation type="journal article" date="2009" name="Plant J.">
        <title>A vacuolar iron transporter in tulip, TgVit1, is responsible for blue coloration in petal cells through iron accumulation.</title>
        <authorList>
            <person name="Momonoi K."/>
            <person name="Yoshida K."/>
            <person name="Mano S."/>
            <person name="Takahashi H."/>
            <person name="Nakamori C."/>
            <person name="Shoji K."/>
            <person name="Nitta A."/>
            <person name="Nishimura M."/>
        </authorList>
    </citation>
    <scope>NUCLEOTIDE SEQUENCE [MRNA]</scope>
    <scope>FUNCTION</scope>
    <scope>TRANSPORTER ACTIVITY</scope>
    <scope>SUBCELLULAR LOCATION</scope>
    <scope>TISSUE SPECIFICITY</scope>
    <scope>DEVELOPMENTAL STAGE</scope>
    <source>
        <strain evidence="5">cv. Murasakizuisho</strain>
        <tissue evidence="9">Petal</tissue>
    </source>
</reference>
<reference evidence="7" key="2">
    <citation type="journal article" date="2010" name="Plant Cell Physiol.">
        <title>Alternative expression of vacuolar iron transporter and ferritin genes leads to blue/purple coloration of flowers in tulip cv. 'Murasakizuisho'.</title>
        <authorList>
            <person name="Shoji K."/>
            <person name="Momonoi K."/>
            <person name="Tsuji T."/>
        </authorList>
    </citation>
    <scope>NUCLEOTIDE SEQUENCE [MRNA]</scope>
    <scope>FUNCTION</scope>
    <scope>TISSUE SPECIFICITY</scope>
    <scope>DEVELOPMENTAL STAGE</scope>
    <scope>MISCELLANEOUS</scope>
    <source>
        <strain evidence="6">cv. Murasakizuisho</strain>
    </source>
</reference>
<gene>
    <name evidence="7" type="primary">VIT1</name>
</gene>
<comment type="function">
    <text evidence="3 4">Vacuolar iron transporter involved in the transfer of iron ions from the cytosol to the vacuole for intracellular iron storage (PubMed:19366427). Plays an essential role in the development of blue coloration in tulip petals most likely due to the accumulation of ferrous ions that can form complexes with anthocyanins (PubMed:19366427, PubMed:20022978).</text>
</comment>
<comment type="catalytic activity">
    <reaction evidence="3">
        <text>Fe(2+)(in) = Fe(2+)(out)</text>
        <dbReference type="Rhea" id="RHEA:28486"/>
        <dbReference type="ChEBI" id="CHEBI:29033"/>
    </reaction>
    <physiologicalReaction direction="left-to-right" evidence="7">
        <dbReference type="Rhea" id="RHEA:28487"/>
    </physiologicalReaction>
</comment>
<comment type="subcellular location">
    <subcellularLocation>
        <location evidence="3">Vacuole membrane</location>
        <topology evidence="2">Multi-pass membrane protein</topology>
    </subcellularLocation>
</comment>
<comment type="tissue specificity">
    <text evidence="3 4">Expressed at high levels in the blue epidermal cells of the inner bottom part of the petal (at protein level) (PubMed:19366427). No detectable expression in parenchyma and epidermis of the purple segments of the petal, parenchyma of the blue segments, leaf, stem, bulb and root (at protein level) (PubMed:19366427). High levels of mRNA in the blue epidermal cells of the inner bottom part of the petal (PubMed:19366427, PubMed:20022978). Low-levels of mRNA in the purple segments of the petal, stem, leaf, root, bulb and pistil (PubMed:19366427, PubMed:20022978).</text>
</comment>
<comment type="developmental stage">
    <text evidence="3 4">Expression begins from an early stage of flower budding (PubMed:20022978). The highest level of expression occurs before the petals develop blue coloration (PubMed:19366427).</text>
</comment>
<comment type="miscellaneous">
    <text evidence="4">Expression of VIT1 with simultaneous RNAi silencing of FER1 results in cells of a darker blue color compared to expression of VIT1 only, indicating that VIT1 expression and FER1 suppression are critical for the development of blue color in the perianth bottom.</text>
</comment>
<comment type="similarity">
    <text evidence="7">Belongs to the CCC1 family.</text>
</comment>
<accession>C4B8E3</accession>
<protein>
    <recommendedName>
        <fullName evidence="7">Vacuolar iron transporter 1</fullName>
        <shortName evidence="8">TgVIT1</shortName>
    </recommendedName>
</protein>
<evidence type="ECO:0000250" key="1">
    <source>
        <dbReference type="UniProtKB" id="P0DO17"/>
    </source>
</evidence>
<evidence type="ECO:0000255" key="2"/>
<evidence type="ECO:0000269" key="3">
    <source>
    </source>
</evidence>
<evidence type="ECO:0000269" key="4">
    <source>
    </source>
</evidence>
<evidence type="ECO:0000303" key="5">
    <source>
    </source>
</evidence>
<evidence type="ECO:0000303" key="6">
    <source>
    </source>
</evidence>
<evidence type="ECO:0000305" key="7"/>
<evidence type="ECO:0000312" key="8">
    <source>
        <dbReference type="EMBL" id="BAH59029.1"/>
    </source>
</evidence>
<evidence type="ECO:0000312" key="9">
    <source>
        <dbReference type="EMBL" id="BAH98154.1"/>
    </source>
</evidence>
<keyword id="KW-0406">Ion transport</keyword>
<keyword id="KW-0408">Iron</keyword>
<keyword id="KW-0410">Iron transport</keyword>
<keyword id="KW-0472">Membrane</keyword>
<keyword id="KW-0479">Metal-binding</keyword>
<keyword id="KW-0812">Transmembrane</keyword>
<keyword id="KW-1133">Transmembrane helix</keyword>
<keyword id="KW-0813">Transport</keyword>
<keyword id="KW-0926">Vacuole</keyword>
<dbReference type="EMBL" id="AB500106">
    <property type="protein sequence ID" value="BAH59029.1"/>
    <property type="molecule type" value="mRNA"/>
</dbReference>
<dbReference type="EMBL" id="AB500109">
    <property type="protein sequence ID" value="BAH59032.1"/>
    <property type="molecule type" value="Genomic_DNA"/>
</dbReference>
<dbReference type="EMBL" id="AB456681">
    <property type="protein sequence ID" value="BAH98154.1"/>
    <property type="molecule type" value="mRNA"/>
</dbReference>
<dbReference type="SMR" id="C4B8E3"/>
<dbReference type="GO" id="GO:0005774">
    <property type="term" value="C:vacuolar membrane"/>
    <property type="evidence" value="ECO:0007669"/>
    <property type="project" value="UniProtKB-SubCell"/>
</dbReference>
<dbReference type="GO" id="GO:0005384">
    <property type="term" value="F:manganese ion transmembrane transporter activity"/>
    <property type="evidence" value="ECO:0007669"/>
    <property type="project" value="InterPro"/>
</dbReference>
<dbReference type="GO" id="GO:0046872">
    <property type="term" value="F:metal ion binding"/>
    <property type="evidence" value="ECO:0007669"/>
    <property type="project" value="UniProtKB-KW"/>
</dbReference>
<dbReference type="GO" id="GO:0030026">
    <property type="term" value="P:intracellular manganese ion homeostasis"/>
    <property type="evidence" value="ECO:0007669"/>
    <property type="project" value="InterPro"/>
</dbReference>
<dbReference type="GO" id="GO:0006826">
    <property type="term" value="P:iron ion transport"/>
    <property type="evidence" value="ECO:0007669"/>
    <property type="project" value="UniProtKB-KW"/>
</dbReference>
<dbReference type="CDD" id="cd02435">
    <property type="entry name" value="CCC1"/>
    <property type="match status" value="1"/>
</dbReference>
<dbReference type="InterPro" id="IPR008217">
    <property type="entry name" value="Ccc1_fam"/>
</dbReference>
<dbReference type="PANTHER" id="PTHR31851">
    <property type="entry name" value="FE(2+)/MN(2+) TRANSPORTER PCL1"/>
    <property type="match status" value="1"/>
</dbReference>
<dbReference type="Pfam" id="PF01988">
    <property type="entry name" value="VIT1"/>
    <property type="match status" value="1"/>
</dbReference>
<feature type="chain" id="PRO_0000459689" description="Vacuolar iron transporter 1">
    <location>
        <begin position="1"/>
        <end position="247"/>
    </location>
</feature>
<feature type="topological domain" description="Cytoplasmic" evidence="7">
    <location>
        <begin position="1"/>
        <end position="33"/>
    </location>
</feature>
<feature type="transmembrane region" description="Helical" evidence="2">
    <location>
        <begin position="34"/>
        <end position="54"/>
    </location>
</feature>
<feature type="topological domain" description="Vacuolar" evidence="7">
    <location>
        <begin position="55"/>
        <end position="60"/>
    </location>
</feature>
<feature type="transmembrane region" description="Helical" evidence="2">
    <location>
        <begin position="61"/>
        <end position="81"/>
    </location>
</feature>
<feature type="topological domain" description="Cytoplasmic" evidence="7">
    <location>
        <begin position="82"/>
        <end position="167"/>
    </location>
</feature>
<feature type="transmembrane region" description="Helical" evidence="2">
    <location>
        <begin position="168"/>
        <end position="188"/>
    </location>
</feature>
<feature type="topological domain" description="Vacuolar" evidence="7">
    <location>
        <begin position="189"/>
        <end position="191"/>
    </location>
</feature>
<feature type="transmembrane region" description="Helical" evidence="2">
    <location>
        <begin position="192"/>
        <end position="212"/>
    </location>
</feature>
<feature type="topological domain" description="Cytoplasmic" evidence="7">
    <location>
        <begin position="213"/>
        <end position="219"/>
    </location>
</feature>
<feature type="transmembrane region" description="Helical" evidence="2">
    <location>
        <begin position="220"/>
        <end position="240"/>
    </location>
</feature>
<feature type="topological domain" description="Vacuolar" evidence="7">
    <location>
        <begin position="241"/>
        <end position="247"/>
    </location>
</feature>
<feature type="binding site" evidence="1">
    <location>
        <position position="99"/>
    </location>
    <ligand>
        <name>Fe cation</name>
        <dbReference type="ChEBI" id="CHEBI:24875"/>
        <label>1</label>
    </ligand>
</feature>
<feature type="binding site" evidence="1">
    <location>
        <position position="99"/>
    </location>
    <ligand>
        <name>Fe cation</name>
        <dbReference type="ChEBI" id="CHEBI:24875"/>
        <label>2</label>
    </ligand>
</feature>
<feature type="binding site" evidence="1">
    <location>
        <position position="102"/>
    </location>
    <ligand>
        <name>Fe cation</name>
        <dbReference type="ChEBI" id="CHEBI:24875"/>
        <label>1</label>
    </ligand>
</feature>
<feature type="binding site" evidence="1">
    <location>
        <position position="102"/>
    </location>
    <ligand>
        <name>Fe cation</name>
        <dbReference type="ChEBI" id="CHEBI:24875"/>
        <label>3</label>
    </ligand>
</feature>
<feature type="binding site" evidence="1">
    <location>
        <position position="110"/>
    </location>
    <ligand>
        <name>Fe cation</name>
        <dbReference type="ChEBI" id="CHEBI:24875"/>
        <label>1</label>
    </ligand>
</feature>
<feature type="binding site" evidence="1">
    <location>
        <position position="110"/>
    </location>
    <ligand>
        <name>Fe cation</name>
        <dbReference type="ChEBI" id="CHEBI:24875"/>
        <label>2</label>
    </ligand>
</feature>
<feature type="binding site" evidence="1">
    <location>
        <position position="110"/>
    </location>
    <ligand>
        <name>Fe cation</name>
        <dbReference type="ChEBI" id="CHEBI:24875"/>
        <label>3</label>
    </ligand>
</feature>
<feature type="binding site" evidence="1">
    <location>
        <position position="113"/>
    </location>
    <ligand>
        <name>Fe cation</name>
        <dbReference type="ChEBI" id="CHEBI:24875"/>
        <label>1</label>
    </ligand>
</feature>
<feature type="binding site" evidence="1">
    <location>
        <position position="113"/>
    </location>
    <ligand>
        <name>Fe cation</name>
        <dbReference type="ChEBI" id="CHEBI:24875"/>
        <label>2</label>
    </ligand>
</feature>
<feature type="binding site" evidence="1">
    <location>
        <position position="113"/>
    </location>
    <ligand>
        <name>Fe cation</name>
        <dbReference type="ChEBI" id="CHEBI:24875"/>
        <label>3</label>
    </ligand>
</feature>
<feature type="binding site" evidence="1">
    <location>
        <position position="146"/>
    </location>
    <ligand>
        <name>Fe cation</name>
        <dbReference type="ChEBI" id="CHEBI:24875"/>
        <label>2</label>
    </ligand>
</feature>
<feature type="binding site" evidence="1">
    <location>
        <position position="150"/>
    </location>
    <ligand>
        <name>Fe cation</name>
        <dbReference type="ChEBI" id="CHEBI:24875"/>
        <label>1</label>
    </ligand>
</feature>
<organism evidence="8">
    <name type="scientific">Tulipa gesneriana</name>
    <name type="common">Garden tulip</name>
    <dbReference type="NCBI Taxonomy" id="13306"/>
    <lineage>
        <taxon>Eukaryota</taxon>
        <taxon>Viridiplantae</taxon>
        <taxon>Streptophyta</taxon>
        <taxon>Embryophyta</taxon>
        <taxon>Tracheophyta</taxon>
        <taxon>Spermatophyta</taxon>
        <taxon>Magnoliopsida</taxon>
        <taxon>Liliopsida</taxon>
        <taxon>Liliales</taxon>
        <taxon>Liliaceae</taxon>
        <taxon>Tulipa</taxon>
    </lineage>
</organism>
<sequence length="247" mass="26200">MVIAGVSPPTPSSENLLQEHEEKHFTATDVVRDVIIGVSDGLTVPFALAAGLSGANVPSSLILTAGIAEVAAGAISMGLGGYLAAKSEEDHYMRELKREQEEIINVPDVEAAEIGEILAQYGLEPHVYNPVVNSLRKNPQAWLDFMMKFELGLEKPEPRRALESAMTIALAYVVGGLVPLSPYFFIPFAKQAMITSIAVTLLALVVFGYIKGRFTGSNPVLSSIQTAIIGALASAAAYAMAKAVQSV</sequence>
<name>VIT1_TULGE</name>
<proteinExistence type="evidence at protein level"/>